<protein>
    <recommendedName>
        <fullName evidence="1">Tryptophan--tRNA ligase</fullName>
        <ecNumber evidence="1">6.1.1.2</ecNumber>
    </recommendedName>
    <alternativeName>
        <fullName evidence="1">Tryptophanyl-tRNA synthetase</fullName>
        <shortName evidence="1">TrpRS</shortName>
    </alternativeName>
</protein>
<sequence length="346" mass="39079">MMKRALTGIQASGKQHLGNYLGVMQSLIELQEQCQLFVFVADLHSITVDFQPQALKQNNFDLVRTLLAVGLDPQKACLFLQSDLLEHSMMGYLMMVQSNLGELQRMTQFKAKKAEQTRNPNGTLNIPTGLLTYPALMAGDILLYQPDIVPVGNDQKQHLELTRDLAQRIQKKFKLKLRLPQFVQNKDTNRIMDLFDPTKKMSKSSKNQNGVIYLDDPKEVVVKKIRQATTDSFNKIRFAPKTQPGVTNMLTILKALLKEPVNQSLTNQLGNDLEAYFSTKSYLDLKNALTEATVNLLVNIQRKREQISREQVFNCLQAGKNQAQATARTTLALFYDGFGLGSQNIK</sequence>
<organism>
    <name type="scientific">Mycoplasma pneumoniae (strain ATCC 29342 / M129 / Subtype 1)</name>
    <name type="common">Mycoplasmoides pneumoniae</name>
    <dbReference type="NCBI Taxonomy" id="272634"/>
    <lineage>
        <taxon>Bacteria</taxon>
        <taxon>Bacillati</taxon>
        <taxon>Mycoplasmatota</taxon>
        <taxon>Mycoplasmoidales</taxon>
        <taxon>Mycoplasmoidaceae</taxon>
        <taxon>Mycoplasmoides</taxon>
    </lineage>
</organism>
<dbReference type="EC" id="6.1.1.2" evidence="1"/>
<dbReference type="EMBL" id="U00089">
    <property type="protein sequence ID" value="AAB96216.1"/>
    <property type="molecule type" value="Genomic_DNA"/>
</dbReference>
<dbReference type="PIR" id="S73894">
    <property type="entry name" value="S73894"/>
</dbReference>
<dbReference type="RefSeq" id="NP_109953.1">
    <property type="nucleotide sequence ID" value="NC_000912.1"/>
</dbReference>
<dbReference type="RefSeq" id="WP_010874622.1">
    <property type="nucleotide sequence ID" value="NZ_OU342337.1"/>
</dbReference>
<dbReference type="PDB" id="2YY5">
    <property type="method" value="X-ray"/>
    <property type="resolution" value="2.55 A"/>
    <property type="chains" value="A/B/C/D=1-346"/>
</dbReference>
<dbReference type="PDBsum" id="2YY5"/>
<dbReference type="SMR" id="P75510"/>
<dbReference type="IntAct" id="P75510">
    <property type="interactions" value="2"/>
</dbReference>
<dbReference type="STRING" id="272634.MPN_265"/>
<dbReference type="EnsemblBacteria" id="AAB96216">
    <property type="protein sequence ID" value="AAB96216"/>
    <property type="gene ID" value="MPN_265"/>
</dbReference>
<dbReference type="KEGG" id="mpn:MPN_265"/>
<dbReference type="PATRIC" id="fig|272634.6.peg.284"/>
<dbReference type="HOGENOM" id="CLU_029244_1_1_14"/>
<dbReference type="OrthoDB" id="9801042at2"/>
<dbReference type="BioCyc" id="MPNE272634:G1GJ3-416-MONOMER"/>
<dbReference type="EvolutionaryTrace" id="P75510"/>
<dbReference type="Proteomes" id="UP000000808">
    <property type="component" value="Chromosome"/>
</dbReference>
<dbReference type="GO" id="GO:0005829">
    <property type="term" value="C:cytosol"/>
    <property type="evidence" value="ECO:0007669"/>
    <property type="project" value="TreeGrafter"/>
</dbReference>
<dbReference type="GO" id="GO:0005524">
    <property type="term" value="F:ATP binding"/>
    <property type="evidence" value="ECO:0007669"/>
    <property type="project" value="UniProtKB-UniRule"/>
</dbReference>
<dbReference type="GO" id="GO:0004830">
    <property type="term" value="F:tryptophan-tRNA ligase activity"/>
    <property type="evidence" value="ECO:0007669"/>
    <property type="project" value="UniProtKB-UniRule"/>
</dbReference>
<dbReference type="GO" id="GO:0006436">
    <property type="term" value="P:tryptophanyl-tRNA aminoacylation"/>
    <property type="evidence" value="ECO:0007669"/>
    <property type="project" value="UniProtKB-UniRule"/>
</dbReference>
<dbReference type="CDD" id="cd00806">
    <property type="entry name" value="TrpRS_core"/>
    <property type="match status" value="1"/>
</dbReference>
<dbReference type="Gene3D" id="3.40.50.620">
    <property type="entry name" value="HUPs"/>
    <property type="match status" value="1"/>
</dbReference>
<dbReference type="Gene3D" id="1.10.240.10">
    <property type="entry name" value="Tyrosyl-Transfer RNA Synthetase"/>
    <property type="match status" value="1"/>
</dbReference>
<dbReference type="HAMAP" id="MF_00140_B">
    <property type="entry name" value="Trp_tRNA_synth_B"/>
    <property type="match status" value="1"/>
</dbReference>
<dbReference type="InterPro" id="IPR002305">
    <property type="entry name" value="aa-tRNA-synth_Ic"/>
</dbReference>
<dbReference type="InterPro" id="IPR014729">
    <property type="entry name" value="Rossmann-like_a/b/a_fold"/>
</dbReference>
<dbReference type="InterPro" id="IPR002306">
    <property type="entry name" value="Trp-tRNA-ligase"/>
</dbReference>
<dbReference type="InterPro" id="IPR024109">
    <property type="entry name" value="Trp-tRNA-ligase_bac-type"/>
</dbReference>
<dbReference type="InterPro" id="IPR050203">
    <property type="entry name" value="Trp-tRNA_synthetase"/>
</dbReference>
<dbReference type="NCBIfam" id="TIGR00233">
    <property type="entry name" value="trpS"/>
    <property type="match status" value="1"/>
</dbReference>
<dbReference type="PANTHER" id="PTHR43766">
    <property type="entry name" value="TRYPTOPHAN--TRNA LIGASE, MITOCHONDRIAL"/>
    <property type="match status" value="1"/>
</dbReference>
<dbReference type="PANTHER" id="PTHR43766:SF1">
    <property type="entry name" value="TRYPTOPHAN--TRNA LIGASE, MITOCHONDRIAL"/>
    <property type="match status" value="1"/>
</dbReference>
<dbReference type="Pfam" id="PF00579">
    <property type="entry name" value="tRNA-synt_1b"/>
    <property type="match status" value="1"/>
</dbReference>
<dbReference type="PRINTS" id="PR01039">
    <property type="entry name" value="TRNASYNTHTRP"/>
</dbReference>
<dbReference type="SUPFAM" id="SSF52374">
    <property type="entry name" value="Nucleotidylyl transferase"/>
    <property type="match status" value="1"/>
</dbReference>
<comment type="function">
    <text evidence="1">Catalyzes the attachment of tryptophan to tRNA(Trp).</text>
</comment>
<comment type="catalytic activity">
    <reaction evidence="1">
        <text>tRNA(Trp) + L-tryptophan + ATP = L-tryptophyl-tRNA(Trp) + AMP + diphosphate + H(+)</text>
        <dbReference type="Rhea" id="RHEA:24080"/>
        <dbReference type="Rhea" id="RHEA-COMP:9671"/>
        <dbReference type="Rhea" id="RHEA-COMP:9705"/>
        <dbReference type="ChEBI" id="CHEBI:15378"/>
        <dbReference type="ChEBI" id="CHEBI:30616"/>
        <dbReference type="ChEBI" id="CHEBI:33019"/>
        <dbReference type="ChEBI" id="CHEBI:57912"/>
        <dbReference type="ChEBI" id="CHEBI:78442"/>
        <dbReference type="ChEBI" id="CHEBI:78535"/>
        <dbReference type="ChEBI" id="CHEBI:456215"/>
        <dbReference type="EC" id="6.1.1.2"/>
    </reaction>
</comment>
<comment type="subunit">
    <text evidence="1">Homodimer.</text>
</comment>
<comment type="subcellular location">
    <subcellularLocation>
        <location evidence="1">Cytoplasm</location>
    </subcellularLocation>
</comment>
<comment type="similarity">
    <text evidence="1">Belongs to the class-I aminoacyl-tRNA synthetase family.</text>
</comment>
<keyword id="KW-0002">3D-structure</keyword>
<keyword id="KW-0030">Aminoacyl-tRNA synthetase</keyword>
<keyword id="KW-0067">ATP-binding</keyword>
<keyword id="KW-0963">Cytoplasm</keyword>
<keyword id="KW-0436">Ligase</keyword>
<keyword id="KW-0547">Nucleotide-binding</keyword>
<keyword id="KW-0648">Protein biosynthesis</keyword>
<keyword id="KW-1185">Reference proteome</keyword>
<name>SYW_MYCPN</name>
<evidence type="ECO:0000255" key="1">
    <source>
        <dbReference type="HAMAP-Rule" id="MF_00140"/>
    </source>
</evidence>
<evidence type="ECO:0007829" key="2">
    <source>
        <dbReference type="PDB" id="2YY5"/>
    </source>
</evidence>
<feature type="chain" id="PRO_0000136648" description="Tryptophan--tRNA ligase">
    <location>
        <begin position="1"/>
        <end position="346"/>
    </location>
</feature>
<feature type="short sequence motif" description="'HIGH' region" evidence="1">
    <location>
        <begin position="11"/>
        <end position="19"/>
    </location>
</feature>
<feature type="short sequence motif" description="'KMSKS' region" evidence="1">
    <location>
        <begin position="200"/>
        <end position="204"/>
    </location>
</feature>
<feature type="binding site" evidence="1">
    <location>
        <begin position="10"/>
        <end position="12"/>
    </location>
    <ligand>
        <name>ATP</name>
        <dbReference type="ChEBI" id="CHEBI:30616"/>
    </ligand>
</feature>
<feature type="binding site" evidence="1">
    <location>
        <begin position="18"/>
        <end position="19"/>
    </location>
    <ligand>
        <name>ATP</name>
        <dbReference type="ChEBI" id="CHEBI:30616"/>
    </ligand>
</feature>
<feature type="binding site" evidence="1">
    <location>
        <position position="140"/>
    </location>
    <ligand>
        <name>L-tryptophan</name>
        <dbReference type="ChEBI" id="CHEBI:57912"/>
    </ligand>
</feature>
<feature type="binding site" evidence="1">
    <location>
        <begin position="152"/>
        <end position="154"/>
    </location>
    <ligand>
        <name>ATP</name>
        <dbReference type="ChEBI" id="CHEBI:30616"/>
    </ligand>
</feature>
<feature type="binding site" evidence="1">
    <location>
        <position position="191"/>
    </location>
    <ligand>
        <name>ATP</name>
        <dbReference type="ChEBI" id="CHEBI:30616"/>
    </ligand>
</feature>
<feature type="binding site" evidence="1">
    <location>
        <begin position="200"/>
        <end position="204"/>
    </location>
    <ligand>
        <name>ATP</name>
        <dbReference type="ChEBI" id="CHEBI:30616"/>
    </ligand>
</feature>
<feature type="strand" evidence="2">
    <location>
        <begin position="4"/>
        <end position="9"/>
    </location>
</feature>
<feature type="helix" evidence="2">
    <location>
        <begin position="17"/>
        <end position="22"/>
    </location>
</feature>
<feature type="helix" evidence="2">
    <location>
        <begin position="24"/>
        <end position="26"/>
    </location>
</feature>
<feature type="helix" evidence="2">
    <location>
        <begin position="27"/>
        <end position="33"/>
    </location>
</feature>
<feature type="strand" evidence="2">
    <location>
        <begin position="34"/>
        <end position="40"/>
    </location>
</feature>
<feature type="helix" evidence="2">
    <location>
        <begin position="42"/>
        <end position="45"/>
    </location>
</feature>
<feature type="helix" evidence="2">
    <location>
        <begin position="52"/>
        <end position="68"/>
    </location>
</feature>
<feature type="turn" evidence="2">
    <location>
        <begin position="73"/>
        <end position="75"/>
    </location>
</feature>
<feature type="strand" evidence="2">
    <location>
        <begin position="76"/>
        <end position="80"/>
    </location>
</feature>
<feature type="helix" evidence="2">
    <location>
        <begin position="81"/>
        <end position="83"/>
    </location>
</feature>
<feature type="helix" evidence="2">
    <location>
        <begin position="85"/>
        <end position="97"/>
    </location>
</feature>
<feature type="helix" evidence="2">
    <location>
        <begin position="100"/>
        <end position="105"/>
    </location>
</feature>
<feature type="helix" evidence="2">
    <location>
        <begin position="107"/>
        <end position="110"/>
    </location>
</feature>
<feature type="helix" evidence="2">
    <location>
        <begin position="129"/>
        <end position="142"/>
    </location>
</feature>
<feature type="strand" evidence="2">
    <location>
        <begin position="147"/>
        <end position="150"/>
    </location>
</feature>
<feature type="helix" evidence="2">
    <location>
        <begin position="153"/>
        <end position="155"/>
    </location>
</feature>
<feature type="helix" evidence="2">
    <location>
        <begin position="156"/>
        <end position="173"/>
    </location>
</feature>
<feature type="strand" evidence="2">
    <location>
        <begin position="181"/>
        <end position="183"/>
    </location>
</feature>
<feature type="turn" evidence="2">
    <location>
        <begin position="186"/>
        <end position="190"/>
    </location>
</feature>
<feature type="helix" evidence="2">
    <location>
        <begin position="208"/>
        <end position="210"/>
    </location>
</feature>
<feature type="helix" evidence="2">
    <location>
        <begin position="218"/>
        <end position="226"/>
    </location>
</feature>
<feature type="turn" evidence="2">
    <location>
        <begin position="240"/>
        <end position="242"/>
    </location>
</feature>
<feature type="helix" evidence="2">
    <location>
        <begin position="244"/>
        <end position="256"/>
    </location>
</feature>
<feature type="helix" evidence="2">
    <location>
        <begin position="260"/>
        <end position="262"/>
    </location>
</feature>
<feature type="helix" evidence="2">
    <location>
        <begin position="263"/>
        <end position="269"/>
    </location>
</feature>
<feature type="helix" evidence="2">
    <location>
        <begin position="273"/>
        <end position="276"/>
    </location>
</feature>
<feature type="helix" evidence="2">
    <location>
        <begin position="277"/>
        <end position="279"/>
    </location>
</feature>
<feature type="helix" evidence="2">
    <location>
        <begin position="282"/>
        <end position="305"/>
    </location>
</feature>
<feature type="helix" evidence="2">
    <location>
        <begin position="309"/>
        <end position="338"/>
    </location>
</feature>
<feature type="helix" evidence="2">
    <location>
        <begin position="342"/>
        <end position="344"/>
    </location>
</feature>
<reference key="1">
    <citation type="journal article" date="1996" name="Nucleic Acids Res.">
        <title>Complete sequence analysis of the genome of the bacterium Mycoplasma pneumoniae.</title>
        <authorList>
            <person name="Himmelreich R."/>
            <person name="Hilbert H."/>
            <person name="Plagens H."/>
            <person name="Pirkl E."/>
            <person name="Li B.-C."/>
            <person name="Herrmann R."/>
        </authorList>
    </citation>
    <scope>NUCLEOTIDE SEQUENCE [LARGE SCALE GENOMIC DNA]</scope>
    <source>
        <strain>ATCC 29342 / M129 / Subtype 1</strain>
    </source>
</reference>
<accession>P75510</accession>
<proteinExistence type="evidence at protein level"/>
<gene>
    <name evidence="1" type="primary">trpS</name>
    <name type="ordered locus">MPN_265</name>
    <name type="ORF">MP568</name>
</gene>